<reference key="1">
    <citation type="journal article" date="2000" name="Nature">
        <title>Sequence and analysis of chromosome 3 of the plant Arabidopsis thaliana.</title>
        <authorList>
            <person name="Salanoubat M."/>
            <person name="Lemcke K."/>
            <person name="Rieger M."/>
            <person name="Ansorge W."/>
            <person name="Unseld M."/>
            <person name="Fartmann B."/>
            <person name="Valle G."/>
            <person name="Bloecker H."/>
            <person name="Perez-Alonso M."/>
            <person name="Obermaier B."/>
            <person name="Delseny M."/>
            <person name="Boutry M."/>
            <person name="Grivell L.A."/>
            <person name="Mache R."/>
            <person name="Puigdomenech P."/>
            <person name="De Simone V."/>
            <person name="Choisne N."/>
            <person name="Artiguenave F."/>
            <person name="Robert C."/>
            <person name="Brottier P."/>
            <person name="Wincker P."/>
            <person name="Cattolico L."/>
            <person name="Weissenbach J."/>
            <person name="Saurin W."/>
            <person name="Quetier F."/>
            <person name="Schaefer M."/>
            <person name="Mueller-Auer S."/>
            <person name="Gabel C."/>
            <person name="Fuchs M."/>
            <person name="Benes V."/>
            <person name="Wurmbach E."/>
            <person name="Drzonek H."/>
            <person name="Erfle H."/>
            <person name="Jordan N."/>
            <person name="Bangert S."/>
            <person name="Wiedelmann R."/>
            <person name="Kranz H."/>
            <person name="Voss H."/>
            <person name="Holland R."/>
            <person name="Brandt P."/>
            <person name="Nyakatura G."/>
            <person name="Vezzi A."/>
            <person name="D'Angelo M."/>
            <person name="Pallavicini A."/>
            <person name="Toppo S."/>
            <person name="Simionati B."/>
            <person name="Conrad A."/>
            <person name="Hornischer K."/>
            <person name="Kauer G."/>
            <person name="Loehnert T.-H."/>
            <person name="Nordsiek G."/>
            <person name="Reichelt J."/>
            <person name="Scharfe M."/>
            <person name="Schoen O."/>
            <person name="Bargues M."/>
            <person name="Terol J."/>
            <person name="Climent J."/>
            <person name="Navarro P."/>
            <person name="Collado C."/>
            <person name="Perez-Perez A."/>
            <person name="Ottenwaelder B."/>
            <person name="Duchemin D."/>
            <person name="Cooke R."/>
            <person name="Laudie M."/>
            <person name="Berger-Llauro C."/>
            <person name="Purnelle B."/>
            <person name="Masuy D."/>
            <person name="de Haan M."/>
            <person name="Maarse A.C."/>
            <person name="Alcaraz J.-P."/>
            <person name="Cottet A."/>
            <person name="Casacuberta E."/>
            <person name="Monfort A."/>
            <person name="Argiriou A."/>
            <person name="Flores M."/>
            <person name="Liguori R."/>
            <person name="Vitale D."/>
            <person name="Mannhaupt G."/>
            <person name="Haase D."/>
            <person name="Schoof H."/>
            <person name="Rudd S."/>
            <person name="Zaccaria P."/>
            <person name="Mewes H.-W."/>
            <person name="Mayer K.F.X."/>
            <person name="Kaul S."/>
            <person name="Town C.D."/>
            <person name="Koo H.L."/>
            <person name="Tallon L.J."/>
            <person name="Jenkins J."/>
            <person name="Rooney T."/>
            <person name="Rizzo M."/>
            <person name="Walts A."/>
            <person name="Utterback T."/>
            <person name="Fujii C.Y."/>
            <person name="Shea T.P."/>
            <person name="Creasy T.H."/>
            <person name="Haas B."/>
            <person name="Maiti R."/>
            <person name="Wu D."/>
            <person name="Peterson J."/>
            <person name="Van Aken S."/>
            <person name="Pai G."/>
            <person name="Militscher J."/>
            <person name="Sellers P."/>
            <person name="Gill J.E."/>
            <person name="Feldblyum T.V."/>
            <person name="Preuss D."/>
            <person name="Lin X."/>
            <person name="Nierman W.C."/>
            <person name="Salzberg S.L."/>
            <person name="White O."/>
            <person name="Venter J.C."/>
            <person name="Fraser C.M."/>
            <person name="Kaneko T."/>
            <person name="Nakamura Y."/>
            <person name="Sato S."/>
            <person name="Kato T."/>
            <person name="Asamizu E."/>
            <person name="Sasamoto S."/>
            <person name="Kimura T."/>
            <person name="Idesawa K."/>
            <person name="Kawashima K."/>
            <person name="Kishida Y."/>
            <person name="Kiyokawa C."/>
            <person name="Kohara M."/>
            <person name="Matsumoto M."/>
            <person name="Matsuno A."/>
            <person name="Muraki A."/>
            <person name="Nakayama S."/>
            <person name="Nakazaki N."/>
            <person name="Shinpo S."/>
            <person name="Takeuchi C."/>
            <person name="Wada T."/>
            <person name="Watanabe A."/>
            <person name="Yamada M."/>
            <person name="Yasuda M."/>
            <person name="Tabata S."/>
        </authorList>
    </citation>
    <scope>NUCLEOTIDE SEQUENCE [LARGE SCALE GENOMIC DNA]</scope>
    <source>
        <strain>cv. Columbia</strain>
    </source>
</reference>
<reference key="2">
    <citation type="journal article" date="2017" name="Plant J.">
        <title>Araport11: a complete reannotation of the Arabidopsis thaliana reference genome.</title>
        <authorList>
            <person name="Cheng C.Y."/>
            <person name="Krishnakumar V."/>
            <person name="Chan A.P."/>
            <person name="Thibaud-Nissen F."/>
            <person name="Schobel S."/>
            <person name="Town C.D."/>
        </authorList>
    </citation>
    <scope>GENOME REANNOTATION</scope>
    <source>
        <strain>cv. Columbia</strain>
    </source>
</reference>
<name>FB208_ARATH</name>
<organism>
    <name type="scientific">Arabidopsis thaliana</name>
    <name type="common">Mouse-ear cress</name>
    <dbReference type="NCBI Taxonomy" id="3702"/>
    <lineage>
        <taxon>Eukaryota</taxon>
        <taxon>Viridiplantae</taxon>
        <taxon>Streptophyta</taxon>
        <taxon>Embryophyta</taxon>
        <taxon>Tracheophyta</taxon>
        <taxon>Spermatophyta</taxon>
        <taxon>Magnoliopsida</taxon>
        <taxon>eudicotyledons</taxon>
        <taxon>Gunneridae</taxon>
        <taxon>Pentapetalae</taxon>
        <taxon>rosids</taxon>
        <taxon>malvids</taxon>
        <taxon>Brassicales</taxon>
        <taxon>Brassicaceae</taxon>
        <taxon>Camelineae</taxon>
        <taxon>Arabidopsis</taxon>
    </lineage>
</organism>
<feature type="chain" id="PRO_0000283478" description="Putative F-box protein At3g58910">
    <location>
        <begin position="1"/>
        <end position="214"/>
    </location>
</feature>
<feature type="domain" description="F-box" evidence="1">
    <location>
        <begin position="1"/>
        <end position="47"/>
    </location>
</feature>
<keyword id="KW-1185">Reference proteome</keyword>
<protein>
    <recommendedName>
        <fullName>Putative F-box protein At3g58910</fullName>
    </recommendedName>
</protein>
<gene>
    <name type="ordered locus">At3g58910</name>
    <name type="ORF">T20N10.260</name>
</gene>
<accession>Q9LXR1</accession>
<sequence length="214" mass="23845">MDRVSSLPDELLCHILSFLTTKETALTSLLSKREIIPLIKSVVFPTLIYASFLVQLVSKLVKLKIGSGIDLCWWTESIFLPMLKTLVLDSVEFCVARFEILFPACPALEELEMANIKVLDSDATVSSASLKTLKIDSSVGSGSFSFDTPNLVYLGYSDFVAEDYPLANFQNLFEARINLVVTKDQIERARAPNNGWLEDDEDDIALRLGIRKSS</sequence>
<dbReference type="EMBL" id="AL353032">
    <property type="protein sequence ID" value="CAB88308.1"/>
    <property type="molecule type" value="Genomic_DNA"/>
</dbReference>
<dbReference type="EMBL" id="CP002686">
    <property type="protein sequence ID" value="AEE79849.1"/>
    <property type="molecule type" value="Genomic_DNA"/>
</dbReference>
<dbReference type="PIR" id="T49174">
    <property type="entry name" value="T49174"/>
</dbReference>
<dbReference type="RefSeq" id="NP_191450.1">
    <property type="nucleotide sequence ID" value="NM_115753.1"/>
</dbReference>
<dbReference type="SMR" id="Q9LXR1"/>
<dbReference type="PaxDb" id="3702-AT3G58910.1"/>
<dbReference type="EnsemblPlants" id="AT3G58910.1">
    <property type="protein sequence ID" value="AT3G58910.1"/>
    <property type="gene ID" value="AT3G58910"/>
</dbReference>
<dbReference type="GeneID" id="825060"/>
<dbReference type="Gramene" id="AT3G58910.1">
    <property type="protein sequence ID" value="AT3G58910.1"/>
    <property type="gene ID" value="AT3G58910"/>
</dbReference>
<dbReference type="KEGG" id="ath:AT3G58910"/>
<dbReference type="Araport" id="AT3G58910"/>
<dbReference type="TAIR" id="AT3G58910"/>
<dbReference type="HOGENOM" id="CLU_1290546_0_0_1"/>
<dbReference type="InParanoid" id="Q9LXR1"/>
<dbReference type="OMA" id="WTESIFL"/>
<dbReference type="PhylomeDB" id="Q9LXR1"/>
<dbReference type="PRO" id="PR:Q9LXR1"/>
<dbReference type="Proteomes" id="UP000006548">
    <property type="component" value="Chromosome 3"/>
</dbReference>
<dbReference type="InterPro" id="IPR036047">
    <property type="entry name" value="F-box-like_dom_sf"/>
</dbReference>
<dbReference type="InterPro" id="IPR001810">
    <property type="entry name" value="F-box_dom"/>
</dbReference>
<dbReference type="InterPro" id="IPR055294">
    <property type="entry name" value="FBL60-like"/>
</dbReference>
<dbReference type="InterPro" id="IPR055411">
    <property type="entry name" value="LRR_FXL15/At3g58940/PEG3-like"/>
</dbReference>
<dbReference type="PANTHER" id="PTHR31293">
    <property type="entry name" value="RNI-LIKE SUPERFAMILY PROTEIN"/>
    <property type="match status" value="1"/>
</dbReference>
<dbReference type="PANTHER" id="PTHR31293:SF16">
    <property type="entry name" value="RNI-LIKE SUPERFAMILY PROTEIN"/>
    <property type="match status" value="1"/>
</dbReference>
<dbReference type="Pfam" id="PF00646">
    <property type="entry name" value="F-box"/>
    <property type="match status" value="1"/>
</dbReference>
<dbReference type="Pfam" id="PF24758">
    <property type="entry name" value="LRR_At5g56370"/>
    <property type="match status" value="1"/>
</dbReference>
<dbReference type="SUPFAM" id="SSF81383">
    <property type="entry name" value="F-box domain"/>
    <property type="match status" value="1"/>
</dbReference>
<dbReference type="SUPFAM" id="SSF52047">
    <property type="entry name" value="RNI-like"/>
    <property type="match status" value="1"/>
</dbReference>
<dbReference type="PROSITE" id="PS50181">
    <property type="entry name" value="FBOX"/>
    <property type="match status" value="1"/>
</dbReference>
<proteinExistence type="predicted"/>
<evidence type="ECO:0000255" key="1">
    <source>
        <dbReference type="PROSITE-ProRule" id="PRU00080"/>
    </source>
</evidence>